<evidence type="ECO:0000255" key="1">
    <source>
        <dbReference type="HAMAP-Rule" id="MF_01139"/>
    </source>
</evidence>
<comment type="function">
    <text evidence="1">Catalyzes the sequential condensation of isopentenyl diphosphate (IPP) with geranylgeranyl diphosphate (GGPP) to yield (2Z,6Z,10Z,14Z,18Z,22Z,26Z,30E,34E,38E)-undecaprenyl diphosphate (tritrans,heptacis-UPP). It is probably the precursor of glycosyl carrier lipids.</text>
</comment>
<comment type="catalytic activity">
    <reaction evidence="1">
        <text>geranylgeranyl diphosphate + 7 isopentenyl diphosphate = tri-trans,hepta-cis-undecaprenyl diphosphate + 7 diphosphate</text>
        <dbReference type="Rhea" id="RHEA:27622"/>
        <dbReference type="ChEBI" id="CHEBI:33019"/>
        <dbReference type="ChEBI" id="CHEBI:57533"/>
        <dbReference type="ChEBI" id="CHEBI:60388"/>
        <dbReference type="ChEBI" id="CHEBI:128769"/>
        <dbReference type="EC" id="2.5.1.89"/>
    </reaction>
</comment>
<comment type="cofactor">
    <cofactor evidence="1">
        <name>Mg(2+)</name>
        <dbReference type="ChEBI" id="CHEBI:18420"/>
    </cofactor>
    <text evidence="1">Binds 2 magnesium ions per subunit.</text>
</comment>
<comment type="subunit">
    <text evidence="1">Homodimer.</text>
</comment>
<comment type="similarity">
    <text evidence="1">Belongs to the UPP synthase family.</text>
</comment>
<feature type="chain" id="PRO_0000123745" description="Tritrans,polycis-undecaprenyl-diphosphate synthase (geranylgeranyl-diphosphate specific)">
    <location>
        <begin position="1"/>
        <end position="258"/>
    </location>
</feature>
<feature type="active site" evidence="1">
    <location>
        <position position="37"/>
    </location>
</feature>
<feature type="active site" description="Proton acceptor" evidence="1">
    <location>
        <position position="85"/>
    </location>
</feature>
<feature type="binding site" evidence="1">
    <location>
        <position position="37"/>
    </location>
    <ligand>
        <name>Mg(2+)</name>
        <dbReference type="ChEBI" id="CHEBI:18420"/>
    </ligand>
</feature>
<feature type="binding site" evidence="1">
    <location>
        <begin position="38"/>
        <end position="41"/>
    </location>
    <ligand>
        <name>substrate</name>
    </ligand>
</feature>
<feature type="binding site" evidence="1">
    <location>
        <position position="54"/>
    </location>
    <ligand>
        <name>substrate</name>
    </ligand>
</feature>
<feature type="binding site" evidence="1">
    <location>
        <begin position="82"/>
        <end position="84"/>
    </location>
    <ligand>
        <name>substrate</name>
    </ligand>
</feature>
<feature type="binding site" evidence="1">
    <location>
        <position position="86"/>
    </location>
    <ligand>
        <name>substrate</name>
    </ligand>
</feature>
<feature type="binding site" evidence="1">
    <location>
        <position position="88"/>
    </location>
    <ligand>
        <name>substrate</name>
    </ligand>
</feature>
<feature type="binding site" evidence="1">
    <location>
        <position position="207"/>
    </location>
    <ligand>
        <name>substrate</name>
    </ligand>
</feature>
<feature type="binding site" evidence="1">
    <location>
        <begin position="213"/>
        <end position="215"/>
    </location>
    <ligand>
        <name>substrate</name>
    </ligand>
</feature>
<feature type="binding site" evidence="1">
    <location>
        <position position="226"/>
    </location>
    <ligand>
        <name>Mg(2+)</name>
        <dbReference type="ChEBI" id="CHEBI:18420"/>
    </ligand>
</feature>
<keyword id="KW-0460">Magnesium</keyword>
<keyword id="KW-0479">Metal-binding</keyword>
<keyword id="KW-0808">Transferase</keyword>
<protein>
    <recommendedName>
        <fullName evidence="1">Tritrans,polycis-undecaprenyl-diphosphate synthase (geranylgeranyl-diphosphate specific)</fullName>
        <ecNumber evidence="1">2.5.1.89</ecNumber>
    </recommendedName>
    <alternativeName>
        <fullName evidence="1">Undecaprenyl diphosphate synthase</fullName>
        <shortName evidence="1">UDS</shortName>
    </alternativeName>
    <alternativeName>
        <fullName evidence="1">Undecaprenyl pyrophosphate synthase</fullName>
        <shortName evidence="1">UPP synthase</shortName>
    </alternativeName>
</protein>
<organism>
    <name type="scientific">Thermoplasma volcanium (strain ATCC 51530 / DSM 4299 / JCM 9571 / NBRC 15438 / GSS1)</name>
    <dbReference type="NCBI Taxonomy" id="273116"/>
    <lineage>
        <taxon>Archaea</taxon>
        <taxon>Methanobacteriati</taxon>
        <taxon>Thermoplasmatota</taxon>
        <taxon>Thermoplasmata</taxon>
        <taxon>Thermoplasmatales</taxon>
        <taxon>Thermoplasmataceae</taxon>
        <taxon>Thermoplasma</taxon>
    </lineage>
</organism>
<gene>
    <name evidence="1" type="primary">uppS</name>
    <name type="ordered locus">TV0600</name>
    <name type="ORF">TVG0591988</name>
</gene>
<proteinExistence type="inferred from homology"/>
<accession>Q97B58</accession>
<reference key="1">
    <citation type="journal article" date="2000" name="Proc. Natl. Acad. Sci. U.S.A.">
        <title>Archaeal adaptation to higher temperatures revealed by genomic sequence of Thermoplasma volcanium.</title>
        <authorList>
            <person name="Kawashima T."/>
            <person name="Amano N."/>
            <person name="Koike H."/>
            <person name="Makino S."/>
            <person name="Higuchi S."/>
            <person name="Kawashima-Ohya Y."/>
            <person name="Watanabe K."/>
            <person name="Yamazaki M."/>
            <person name="Kanehori K."/>
            <person name="Kawamoto T."/>
            <person name="Nunoshiba T."/>
            <person name="Yamamoto Y."/>
            <person name="Aramaki H."/>
            <person name="Makino K."/>
            <person name="Suzuki M."/>
        </authorList>
    </citation>
    <scope>NUCLEOTIDE SEQUENCE [LARGE SCALE GENOMIC DNA]</scope>
    <source>
        <strain>ATCC 51530 / DSM 4299 / JCM 9571 / NBRC 15438 / GSS1</strain>
    </source>
</reference>
<dbReference type="EC" id="2.5.1.89" evidence="1"/>
<dbReference type="EMBL" id="BA000011">
    <property type="protein sequence ID" value="BAB59742.1"/>
    <property type="molecule type" value="Genomic_DNA"/>
</dbReference>
<dbReference type="RefSeq" id="WP_010916858.1">
    <property type="nucleotide sequence ID" value="NC_002689.2"/>
</dbReference>
<dbReference type="SMR" id="Q97B58"/>
<dbReference type="STRING" id="273116.gene:9381388"/>
<dbReference type="PaxDb" id="273116-14324815"/>
<dbReference type="GeneID" id="1441706"/>
<dbReference type="KEGG" id="tvo:TVG0591988"/>
<dbReference type="eggNOG" id="arCOG01532">
    <property type="taxonomic scope" value="Archaea"/>
</dbReference>
<dbReference type="HOGENOM" id="CLU_038505_2_0_2"/>
<dbReference type="OrthoDB" id="8293at2157"/>
<dbReference type="PhylomeDB" id="Q97B58"/>
<dbReference type="Proteomes" id="UP000001017">
    <property type="component" value="Chromosome"/>
</dbReference>
<dbReference type="GO" id="GO:0045547">
    <property type="term" value="F:ditrans,polycis-polyprenyl diphosphate synthase [(2E,6E)-farnesyl diphosphate specific] activity"/>
    <property type="evidence" value="ECO:0007669"/>
    <property type="project" value="TreeGrafter"/>
</dbReference>
<dbReference type="GO" id="GO:0000287">
    <property type="term" value="F:magnesium ion binding"/>
    <property type="evidence" value="ECO:0007669"/>
    <property type="project" value="UniProtKB-UniRule"/>
</dbReference>
<dbReference type="GO" id="GO:0016094">
    <property type="term" value="P:polyprenol biosynthetic process"/>
    <property type="evidence" value="ECO:0007669"/>
    <property type="project" value="TreeGrafter"/>
</dbReference>
<dbReference type="CDD" id="cd00475">
    <property type="entry name" value="Cis_IPPS"/>
    <property type="match status" value="1"/>
</dbReference>
<dbReference type="FunFam" id="3.40.1180.10:FF:000003">
    <property type="entry name" value="Isoprenyl transferase 2"/>
    <property type="match status" value="1"/>
</dbReference>
<dbReference type="Gene3D" id="3.40.1180.10">
    <property type="entry name" value="Decaprenyl diphosphate synthase-like"/>
    <property type="match status" value="1"/>
</dbReference>
<dbReference type="HAMAP" id="MF_01139">
    <property type="entry name" value="ISPT"/>
    <property type="match status" value="1"/>
</dbReference>
<dbReference type="InterPro" id="IPR001441">
    <property type="entry name" value="UPP_synth-like"/>
</dbReference>
<dbReference type="InterPro" id="IPR018520">
    <property type="entry name" value="UPP_synth-like_CS"/>
</dbReference>
<dbReference type="InterPro" id="IPR036424">
    <property type="entry name" value="UPP_synth-like_sf"/>
</dbReference>
<dbReference type="NCBIfam" id="TIGR00055">
    <property type="entry name" value="uppS"/>
    <property type="match status" value="1"/>
</dbReference>
<dbReference type="PANTHER" id="PTHR10291:SF43">
    <property type="entry name" value="DEHYDRODOLICHYL DIPHOSPHATE SYNTHASE COMPLEX SUBUNIT DHDDS"/>
    <property type="match status" value="1"/>
</dbReference>
<dbReference type="PANTHER" id="PTHR10291">
    <property type="entry name" value="DEHYDRODOLICHYL DIPHOSPHATE SYNTHASE FAMILY MEMBER"/>
    <property type="match status" value="1"/>
</dbReference>
<dbReference type="Pfam" id="PF01255">
    <property type="entry name" value="Prenyltransf"/>
    <property type="match status" value="1"/>
</dbReference>
<dbReference type="SUPFAM" id="SSF64005">
    <property type="entry name" value="Undecaprenyl diphosphate synthase"/>
    <property type="match status" value="1"/>
</dbReference>
<dbReference type="PROSITE" id="PS01066">
    <property type="entry name" value="UPP_SYNTHASE"/>
    <property type="match status" value="1"/>
</dbReference>
<name>UPPS_THEVO</name>
<sequence length="258" mass="30220">MGISGKLGDIASKVYEDVLMEEVKKYPRPRHVGIITDGNRRYARIVGIPENEGHVKGKNKVEEVLDWCMELDIKIVTFYAFSTENFKRSPEEVDFLFHLINDAFISLLKDERVYKNKINVKVIGNVSMLPEYLRETIKITEETTKNFSNYHMNLAIGYGGREEILDAIKRIARDAIAGKINVDEIDESKFRNYLYDGNLPDPDLILRTSGEERISNFLLWQSAYSELYFSDVYWPEFSKLDFLRAIYSYQRRQRRFGR</sequence>